<sequence length="31" mass="3858">MLSWLKGHKRYCRFKDCTCEKCILIIERQRV</sequence>
<keyword id="KW-0238">DNA-binding</keyword>
<keyword id="KW-0479">Metal-binding</keyword>
<keyword id="KW-0539">Nucleus</keyword>
<keyword id="KW-1185">Reference proteome</keyword>
<keyword id="KW-0804">Transcription</keyword>
<keyword id="KW-0805">Transcription regulation</keyword>
<keyword id="KW-0862">Zinc</keyword>
<accession>Q9DFI0</accession>
<accession>Q9DD75</accession>
<reference evidence="4" key="1">
    <citation type="journal article" date="2002" name="J. Exp. Zool.">
        <title>A conserved family of doublesex-related genes from fishes.</title>
        <authorList>
            <person name="Huang X."/>
            <person name="Cheng H."/>
            <person name="Guo Y."/>
            <person name="Liu L."/>
            <person name="Gui J."/>
            <person name="Zhou R."/>
        </authorList>
    </citation>
    <scope>NUCLEOTIDE SEQUENCE [GENOMIC DNA]</scope>
    <source>
        <tissue evidence="3">Embryo</tissue>
    </source>
</reference>
<protein>
    <recommendedName>
        <fullName>Doublesex- and mab-3-related transcription factor 3b</fullName>
    </recommendedName>
    <alternativeName>
        <fullName>Dmrt7b/Dmrt10</fullName>
    </alternativeName>
</protein>
<organism evidence="5">
    <name type="scientific">Danio rerio</name>
    <name type="common">Zebrafish</name>
    <name type="synonym">Brachydanio rerio</name>
    <dbReference type="NCBI Taxonomy" id="7955"/>
    <lineage>
        <taxon>Eukaryota</taxon>
        <taxon>Metazoa</taxon>
        <taxon>Chordata</taxon>
        <taxon>Craniata</taxon>
        <taxon>Vertebrata</taxon>
        <taxon>Euteleostomi</taxon>
        <taxon>Actinopterygii</taxon>
        <taxon>Neopterygii</taxon>
        <taxon>Teleostei</taxon>
        <taxon>Ostariophysi</taxon>
        <taxon>Cypriniformes</taxon>
        <taxon>Danionidae</taxon>
        <taxon>Danioninae</taxon>
        <taxon>Danio</taxon>
    </lineage>
</organism>
<proteinExistence type="inferred from homology"/>
<feature type="chain" id="PRO_0000207050" description="Doublesex- and mab-3-related transcription factor 3b">
    <location>
        <begin position="1" status="less than"/>
        <end position="31" status="greater than"/>
    </location>
</feature>
<feature type="DNA-binding region" description="DM" evidence="2 4">
    <location>
        <begin position="1" status="less than"/>
        <end position="31" status="greater than"/>
    </location>
</feature>
<feature type="sequence conflict" description="In Ref. 1; AAG18561." evidence="4" ref="1">
    <original>M</original>
    <variation>V</variation>
    <location>
        <position position="1"/>
    </location>
</feature>
<feature type="non-terminal residue" evidence="5">
    <location>
        <position position="1"/>
    </location>
</feature>
<feature type="non-terminal residue" evidence="5">
    <location>
        <position position="31"/>
    </location>
</feature>
<name>DMT3B_DANRE</name>
<dbReference type="EMBL" id="AF272965">
    <property type="protein sequence ID" value="AAG18561.1"/>
    <property type="molecule type" value="Genomic_DNA"/>
</dbReference>
<dbReference type="EMBL" id="AF272966">
    <property type="protein sequence ID" value="AAG18562.1"/>
    <property type="molecule type" value="Genomic_DNA"/>
</dbReference>
<dbReference type="AGR" id="ZFIN:ZDB-GENE-021220-5"/>
<dbReference type="ZFIN" id="ZDB-GENE-021220-5">
    <property type="gene designation" value="dmrt3b"/>
</dbReference>
<dbReference type="InParanoid" id="Q9DFI0"/>
<dbReference type="Proteomes" id="UP000000437">
    <property type="component" value="Unplaced"/>
</dbReference>
<dbReference type="GO" id="GO:0005634">
    <property type="term" value="C:nucleus"/>
    <property type="evidence" value="ECO:0007669"/>
    <property type="project" value="UniProtKB-SubCell"/>
</dbReference>
<dbReference type="GO" id="GO:0046872">
    <property type="term" value="F:metal ion binding"/>
    <property type="evidence" value="ECO:0007669"/>
    <property type="project" value="UniProtKB-KW"/>
</dbReference>
<dbReference type="GO" id="GO:0043565">
    <property type="term" value="F:sequence-specific DNA binding"/>
    <property type="evidence" value="ECO:0007669"/>
    <property type="project" value="InterPro"/>
</dbReference>
<dbReference type="GO" id="GO:0006355">
    <property type="term" value="P:regulation of DNA-templated transcription"/>
    <property type="evidence" value="ECO:0007669"/>
    <property type="project" value="InterPro"/>
</dbReference>
<dbReference type="Gene3D" id="4.10.1040.10">
    <property type="entry name" value="DM DNA-binding domain"/>
    <property type="match status" value="1"/>
</dbReference>
<dbReference type="InterPro" id="IPR001275">
    <property type="entry name" value="DM_DNA-bd"/>
</dbReference>
<dbReference type="InterPro" id="IPR036407">
    <property type="entry name" value="DM_DNA-bd_sf"/>
</dbReference>
<dbReference type="InterPro" id="IPR026607">
    <property type="entry name" value="DMRT"/>
</dbReference>
<dbReference type="PANTHER" id="PTHR12322">
    <property type="entry name" value="DOUBLESEX AND MAB-3 RELATED TRANSCRIPTION FACTOR DMRT"/>
    <property type="match status" value="1"/>
</dbReference>
<dbReference type="PANTHER" id="PTHR12322:SF120">
    <property type="entry name" value="DOUBLESEX- AND MAB-3-RELATED TRANSCRIPTION FACTOR 3"/>
    <property type="match status" value="1"/>
</dbReference>
<dbReference type="Pfam" id="PF00751">
    <property type="entry name" value="DM"/>
    <property type="match status" value="1"/>
</dbReference>
<dbReference type="SUPFAM" id="SSF82927">
    <property type="entry name" value="Cysteine-rich DNA binding domain, (DM domain)"/>
    <property type="match status" value="1"/>
</dbReference>
<dbReference type="PROSITE" id="PS50809">
    <property type="entry name" value="DM_2"/>
    <property type="match status" value="1"/>
</dbReference>
<comment type="function">
    <text evidence="1">May regulate transcription.</text>
</comment>
<comment type="subcellular location">
    <subcellularLocation>
        <location evidence="2">Nucleus</location>
    </subcellularLocation>
</comment>
<comment type="similarity">
    <text evidence="4">Belongs to the DMRT family.</text>
</comment>
<evidence type="ECO:0000250" key="1"/>
<evidence type="ECO:0000255" key="2">
    <source>
        <dbReference type="PROSITE-ProRule" id="PRU00070"/>
    </source>
</evidence>
<evidence type="ECO:0000269" key="3">
    <source>
    </source>
</evidence>
<evidence type="ECO:0000305" key="4"/>
<evidence type="ECO:0000312" key="5">
    <source>
        <dbReference type="EMBL" id="AAG18562.1"/>
    </source>
</evidence>
<gene>
    <name type="primary">dmrt3b</name>
    <name type="synonym">dmrt3a2</name>
</gene>